<keyword id="KW-0175">Coiled coil</keyword>
<keyword id="KW-0509">mRNA transport</keyword>
<keyword id="KW-0906">Nuclear pore complex</keyword>
<keyword id="KW-0539">Nucleus</keyword>
<keyword id="KW-0653">Protein transport</keyword>
<keyword id="KW-1185">Reference proteome</keyword>
<keyword id="KW-0677">Repeat</keyword>
<keyword id="KW-0811">Translocation</keyword>
<keyword id="KW-0813">Transport</keyword>
<keyword id="KW-0853">WD repeat</keyword>
<feature type="chain" id="PRO_0000433191" description="Nucleoporin NUP37">
    <location>
        <begin position="1"/>
        <end position="751"/>
    </location>
</feature>
<feature type="repeat" description="WD 1" evidence="2">
    <location>
        <begin position="21"/>
        <end position="65"/>
    </location>
</feature>
<feature type="repeat" description="WD 2" evidence="2">
    <location>
        <begin position="162"/>
        <end position="209"/>
    </location>
</feature>
<feature type="repeat" description="WD 3" evidence="2">
    <location>
        <begin position="237"/>
        <end position="271"/>
    </location>
</feature>
<feature type="repeat" description="WD 4" evidence="2">
    <location>
        <begin position="282"/>
        <end position="322"/>
    </location>
</feature>
<feature type="repeat" description="WD 5" evidence="2">
    <location>
        <begin position="351"/>
        <end position="390"/>
    </location>
</feature>
<feature type="repeat" description="WD 6" evidence="2">
    <location>
        <begin position="455"/>
        <end position="492"/>
    </location>
</feature>
<feature type="repeat" description="WD 7" evidence="2">
    <location>
        <begin position="494"/>
        <end position="534"/>
    </location>
</feature>
<feature type="region of interest" description="Disordered" evidence="3">
    <location>
        <begin position="57"/>
        <end position="77"/>
    </location>
</feature>
<feature type="region of interest" description="Disordered" evidence="3">
    <location>
        <begin position="419"/>
        <end position="443"/>
    </location>
</feature>
<feature type="region of interest" description="Disordered" evidence="3">
    <location>
        <begin position="671"/>
        <end position="692"/>
    </location>
</feature>
<feature type="coiled-coil region" evidence="2">
    <location>
        <begin position="716"/>
        <end position="750"/>
    </location>
</feature>
<feature type="compositionally biased region" description="Basic and acidic residues" evidence="3">
    <location>
        <begin position="68"/>
        <end position="77"/>
    </location>
</feature>
<feature type="compositionally biased region" description="Polar residues" evidence="3">
    <location>
        <begin position="423"/>
        <end position="438"/>
    </location>
</feature>
<feature type="compositionally biased region" description="Polar residues" evidence="3">
    <location>
        <begin position="683"/>
        <end position="692"/>
    </location>
</feature>
<feature type="sequence conflict" description="In Ref. 1; EGS22354." evidence="5" ref="1">
    <original>GRKRVFFEEG</original>
    <variation>AELGKDCGKSSLFGKQKVAPAEVHSPRGGSRAREMRELLRLKPEELLDSPKMEKVKERITISPAKRKASGGLLREVLERSAKRNPALFPEKF</variation>
    <location>
        <begin position="742"/>
        <end position="751"/>
    </location>
</feature>
<protein>
    <recommendedName>
        <fullName evidence="4">Nucleoporin NUP37</fullName>
    </recommendedName>
    <alternativeName>
        <fullName>Nuclear pore protein NUP37</fullName>
    </alternativeName>
</protein>
<name>NUP37_CHATD</name>
<sequence>MALQPVPRMRRTLQNTQHTYSLGRRIYDVKTYPVQSPQGATILIYGHENGATVVWRGGRRLKPPKPQTNEKRNGTKPEDAVMIIDSDDETGPTFVDKPEFEDSPSVADGSVAEIIQTLDLALGTAVNHIAVLPMPPCAAEDASWNGANILKTKIVFAVTCATNDVYVITLPLTPPSHEAKARPELRKSLLAGNAGKGVWGETLTLLTGPSRSCNGVAISLVKHRSSSRSRSSERSAAQAAPITRVVVAAHSREASGTLRLWDVPLEAKPGTINRVEPFQTEYLPSPLTSISFNPVNLTQLLTVASPHAVRIYDYATASLPSDDTSEGPFPSQGSWLISLYPPFARGPAMSTSRKPIVAAEWIARGRAILTLLADGQWGIWDLDGASPTAAGGGSNLFSKTSAGLRGTAITAFSVTGHLEGTSPLRNPTTQKASSSSSGEFVPMTPHTRRDAIATAFGGSPEKLAAVRGGITVAQLPSTLTSGAGDESAVLFLGGADPIVCVIPVLSKFWDSQLRRAAGGGVNLWSGAQPTRMIRLTDLSAGLLGERCTGAVAITKAVRANASTNGILKEDDNSGSQGLPIEVLLQGESRLVIVHENGDAPTSSLTSRLLGARKKQRDEFKSVNAIVAYPPLEKPSVSFNLNLTQRPEKPGTLFAPRSRHSKSLFEQSIDTIPSTDAGDEETIPATSAPSSQQGFMFATDLELAADLPDDEADAEGRDVEQELLDIMEIDRELEQLEQARERGRKRVFFEEG</sequence>
<reference key="1">
    <citation type="journal article" date="2011" name="Cell">
        <title>Insight into structure and assembly of the nuclear pore complex by utilizing the genome of a eukaryotic thermophile.</title>
        <authorList>
            <person name="Amlacher S."/>
            <person name="Sarges P."/>
            <person name="Flemming D."/>
            <person name="van Noort V."/>
            <person name="Kunze R."/>
            <person name="Devos D.P."/>
            <person name="Arumugam M."/>
            <person name="Bork P."/>
            <person name="Hurt E."/>
        </authorList>
    </citation>
    <scope>NUCLEOTIDE SEQUENCE [LARGE SCALE GENOMIC DNA]</scope>
    <source>
        <strain>DSM 1495 / CBS 144.50 / IMI 039719</strain>
    </source>
</reference>
<organism>
    <name type="scientific">Chaetomium thermophilum (strain DSM 1495 / CBS 144.50 / IMI 039719)</name>
    <name type="common">Thermochaetoides thermophila</name>
    <dbReference type="NCBI Taxonomy" id="759272"/>
    <lineage>
        <taxon>Eukaryota</taxon>
        <taxon>Fungi</taxon>
        <taxon>Dikarya</taxon>
        <taxon>Ascomycota</taxon>
        <taxon>Pezizomycotina</taxon>
        <taxon>Sordariomycetes</taxon>
        <taxon>Sordariomycetidae</taxon>
        <taxon>Sordariales</taxon>
        <taxon>Chaetomiaceae</taxon>
        <taxon>Thermochaetoides</taxon>
    </lineage>
</organism>
<evidence type="ECO:0000250" key="1">
    <source>
        <dbReference type="UniProtKB" id="Q8NFH4"/>
    </source>
</evidence>
<evidence type="ECO:0000255" key="2"/>
<evidence type="ECO:0000256" key="3">
    <source>
        <dbReference type="SAM" id="MobiDB-lite"/>
    </source>
</evidence>
<evidence type="ECO:0000303" key="4">
    <source>
    </source>
</evidence>
<evidence type="ECO:0000305" key="5"/>
<evidence type="ECO:0000305" key="6">
    <source>
    </source>
</evidence>
<dbReference type="EMBL" id="GL988040">
    <property type="protein sequence ID" value="EGS22354.1"/>
    <property type="molecule type" value="Genomic_DNA"/>
</dbReference>
<dbReference type="EMBL" id="JF276295">
    <property type="protein sequence ID" value="AEL00689.1"/>
    <property type="molecule type" value="Genomic_DNA"/>
</dbReference>
<dbReference type="RefSeq" id="XP_006692373.1">
    <property type="nucleotide sequence ID" value="XM_006692310.1"/>
</dbReference>
<dbReference type="DIP" id="DIP-60571N"/>
<dbReference type="IntAct" id="G0S2X1">
    <property type="interactions" value="3"/>
</dbReference>
<dbReference type="STRING" id="759272.G0S2X1"/>
<dbReference type="TCDB" id="1.I.1.1.2">
    <property type="family name" value="the nuclear pore complex (npc) family"/>
</dbReference>
<dbReference type="GeneID" id="18255917"/>
<dbReference type="KEGG" id="cthr:CTHT_0018790"/>
<dbReference type="eggNOG" id="ENOG502SJ54">
    <property type="taxonomic scope" value="Eukaryota"/>
</dbReference>
<dbReference type="HOGENOM" id="CLU_007901_0_0_1"/>
<dbReference type="OrthoDB" id="5323870at2759"/>
<dbReference type="Proteomes" id="UP000008066">
    <property type="component" value="Unassembled WGS sequence"/>
</dbReference>
<dbReference type="GO" id="GO:0005643">
    <property type="term" value="C:nuclear pore"/>
    <property type="evidence" value="ECO:0007669"/>
    <property type="project" value="UniProtKB-SubCell"/>
</dbReference>
<dbReference type="GO" id="GO:0051028">
    <property type="term" value="P:mRNA transport"/>
    <property type="evidence" value="ECO:0007669"/>
    <property type="project" value="UniProtKB-KW"/>
</dbReference>
<dbReference type="GO" id="GO:0015031">
    <property type="term" value="P:protein transport"/>
    <property type="evidence" value="ECO:0007669"/>
    <property type="project" value="UniProtKB-KW"/>
</dbReference>
<dbReference type="Gene3D" id="2.130.10.10">
    <property type="entry name" value="YVTN repeat-like/Quinoprotein amine dehydrogenase"/>
    <property type="match status" value="1"/>
</dbReference>
<dbReference type="InterPro" id="IPR015943">
    <property type="entry name" value="WD40/YVTN_repeat-like_dom_sf"/>
</dbReference>
<dbReference type="InterPro" id="IPR036322">
    <property type="entry name" value="WD40_repeat_dom_sf"/>
</dbReference>
<dbReference type="SUPFAM" id="SSF50978">
    <property type="entry name" value="WD40 repeat-like"/>
    <property type="match status" value="1"/>
</dbReference>
<dbReference type="PROSITE" id="PS00678">
    <property type="entry name" value="WD_REPEATS_1"/>
    <property type="match status" value="1"/>
</dbReference>
<proteinExistence type="evidence at protein level"/>
<gene>
    <name type="primary">NUP37</name>
    <name type="ORF">CTHT_0018790</name>
</gene>
<accession>G0S2X1</accession>
<accession>G0ZGV1</accession>
<comment type="subunit">
    <text evidence="1 6">The nuclear pore complex (NPC) constitutes the exclusive means of nucleocytoplasmic transport. NPCs allow the passive diffusion of ions and small molecules and the active, nuclear transport receptor-mediated bidirectional transport of macromolecules such as proteins, RNAs, ribonucleoparticles (RNPs), and ribosomal subunits across the nuclear envelope. The 55-60 MDa NPC is composed of at least 28 different subunits: AMO1, ELYS, GLE1, GLE2, MLP1, NDC1, NIC96, NSP1, NUP133, NUP145, NUP152, NUP159, NUP170, NUP188, NUP192, NUP37, NUP49, NUP53, NUP56, NUP57, NUP82, NUP84, NUP85, POM152, POM33, POM34, SEC13 and SEH1. Due to its 8-fold rotational symmetry, all subunits are present with 8 copies or multiples thereof.</text>
</comment>
<comment type="interaction">
    <interactant intactId="EBI-16069375">
        <id>G0S2X1</id>
    </interactant>
    <interactant intactId="EBI-16069242">
        <id>G0S0E7</id>
        <label>NUP120</label>
    </interactant>
    <organismsDiffer>false</organismsDiffer>
    <experiments>8</experiments>
</comment>
<comment type="subcellular location">
    <subcellularLocation>
        <location evidence="1">Nucleus</location>
        <location evidence="1">Nuclear pore complex</location>
    </subcellularLocation>
</comment>